<proteinExistence type="inferred from homology"/>
<name>RL35_BUCA5</name>
<keyword id="KW-0687">Ribonucleoprotein</keyword>
<keyword id="KW-0689">Ribosomal protein</keyword>
<sequence length="65" mass="7510">MPKIKTLKSAAKRFKITASGKFKRKQANLRHILTKKTTTKKRHLRPKILVSTGDMDRVKSFLPYA</sequence>
<feature type="chain" id="PRO_1000146127" description="Large ribosomal subunit protein bL35">
    <location>
        <begin position="1"/>
        <end position="65"/>
    </location>
</feature>
<dbReference type="EMBL" id="CP001161">
    <property type="protein sequence ID" value="ACL30500.1"/>
    <property type="molecule type" value="Genomic_DNA"/>
</dbReference>
<dbReference type="RefSeq" id="WP_009874083.1">
    <property type="nucleotide sequence ID" value="NC_011833.1"/>
</dbReference>
<dbReference type="SMR" id="B8D8S8"/>
<dbReference type="KEGG" id="bap:BUAP5A_125"/>
<dbReference type="HOGENOM" id="CLU_169643_1_1_6"/>
<dbReference type="OrthoDB" id="47476at2"/>
<dbReference type="Proteomes" id="UP000006904">
    <property type="component" value="Chromosome"/>
</dbReference>
<dbReference type="GO" id="GO:0022625">
    <property type="term" value="C:cytosolic large ribosomal subunit"/>
    <property type="evidence" value="ECO:0007669"/>
    <property type="project" value="TreeGrafter"/>
</dbReference>
<dbReference type="GO" id="GO:0003735">
    <property type="term" value="F:structural constituent of ribosome"/>
    <property type="evidence" value="ECO:0007669"/>
    <property type="project" value="InterPro"/>
</dbReference>
<dbReference type="GO" id="GO:0006412">
    <property type="term" value="P:translation"/>
    <property type="evidence" value="ECO:0007669"/>
    <property type="project" value="UniProtKB-UniRule"/>
</dbReference>
<dbReference type="FunFam" id="4.10.410.60:FF:000001">
    <property type="entry name" value="50S ribosomal protein L35"/>
    <property type="match status" value="1"/>
</dbReference>
<dbReference type="Gene3D" id="4.10.410.60">
    <property type="match status" value="1"/>
</dbReference>
<dbReference type="HAMAP" id="MF_00514">
    <property type="entry name" value="Ribosomal_bL35"/>
    <property type="match status" value="1"/>
</dbReference>
<dbReference type="InterPro" id="IPR001706">
    <property type="entry name" value="Ribosomal_bL35"/>
</dbReference>
<dbReference type="InterPro" id="IPR021137">
    <property type="entry name" value="Ribosomal_bL35-like"/>
</dbReference>
<dbReference type="InterPro" id="IPR018265">
    <property type="entry name" value="Ribosomal_bL35_CS"/>
</dbReference>
<dbReference type="InterPro" id="IPR037229">
    <property type="entry name" value="Ribosomal_bL35_sf"/>
</dbReference>
<dbReference type="NCBIfam" id="TIGR00001">
    <property type="entry name" value="rpmI_bact"/>
    <property type="match status" value="1"/>
</dbReference>
<dbReference type="PANTHER" id="PTHR33343">
    <property type="entry name" value="54S RIBOSOMAL PROTEIN BL35M"/>
    <property type="match status" value="1"/>
</dbReference>
<dbReference type="PANTHER" id="PTHR33343:SF1">
    <property type="entry name" value="LARGE RIBOSOMAL SUBUNIT PROTEIN BL35M"/>
    <property type="match status" value="1"/>
</dbReference>
<dbReference type="Pfam" id="PF01632">
    <property type="entry name" value="Ribosomal_L35p"/>
    <property type="match status" value="1"/>
</dbReference>
<dbReference type="PRINTS" id="PR00064">
    <property type="entry name" value="RIBOSOMALL35"/>
</dbReference>
<dbReference type="SUPFAM" id="SSF143034">
    <property type="entry name" value="L35p-like"/>
    <property type="match status" value="1"/>
</dbReference>
<dbReference type="PROSITE" id="PS00936">
    <property type="entry name" value="RIBOSOMAL_L35"/>
    <property type="match status" value="1"/>
</dbReference>
<accession>B8D8S8</accession>
<gene>
    <name evidence="1" type="primary">rpmI</name>
    <name type="ordered locus">BUAP5A_125</name>
</gene>
<protein>
    <recommendedName>
        <fullName evidence="1">Large ribosomal subunit protein bL35</fullName>
    </recommendedName>
    <alternativeName>
        <fullName evidence="2">50S ribosomal protein L35</fullName>
    </alternativeName>
</protein>
<reference key="1">
    <citation type="journal article" date="2009" name="Science">
        <title>The dynamics and time scale of ongoing genomic erosion in symbiotic bacteria.</title>
        <authorList>
            <person name="Moran N.A."/>
            <person name="McLaughlin H.J."/>
            <person name="Sorek R."/>
        </authorList>
    </citation>
    <scope>NUCLEOTIDE SEQUENCE [LARGE SCALE GENOMIC DNA]</scope>
    <source>
        <strain>5A</strain>
    </source>
</reference>
<organism>
    <name type="scientific">Buchnera aphidicola subsp. Acyrthosiphon pisum (strain 5A)</name>
    <dbReference type="NCBI Taxonomy" id="563178"/>
    <lineage>
        <taxon>Bacteria</taxon>
        <taxon>Pseudomonadati</taxon>
        <taxon>Pseudomonadota</taxon>
        <taxon>Gammaproteobacteria</taxon>
        <taxon>Enterobacterales</taxon>
        <taxon>Erwiniaceae</taxon>
        <taxon>Buchnera</taxon>
    </lineage>
</organism>
<evidence type="ECO:0000255" key="1">
    <source>
        <dbReference type="HAMAP-Rule" id="MF_00514"/>
    </source>
</evidence>
<evidence type="ECO:0000305" key="2"/>
<comment type="similarity">
    <text evidence="1">Belongs to the bacterial ribosomal protein bL35 family.</text>
</comment>